<organism>
    <name type="scientific">Stenotrophomonas maltophilia (strain R551-3)</name>
    <dbReference type="NCBI Taxonomy" id="391008"/>
    <lineage>
        <taxon>Bacteria</taxon>
        <taxon>Pseudomonadati</taxon>
        <taxon>Pseudomonadota</taxon>
        <taxon>Gammaproteobacteria</taxon>
        <taxon>Lysobacterales</taxon>
        <taxon>Lysobacteraceae</taxon>
        <taxon>Stenotrophomonas</taxon>
        <taxon>Stenotrophomonas maltophilia group</taxon>
    </lineage>
</organism>
<gene>
    <name evidence="1" type="primary">coaX</name>
    <name type="ordered locus">Smal_0234</name>
</gene>
<feature type="chain" id="PRO_1000140257" description="Type III pantothenate kinase">
    <location>
        <begin position="1"/>
        <end position="243"/>
    </location>
</feature>
<feature type="active site" description="Proton acceptor" evidence="1">
    <location>
        <position position="100"/>
    </location>
</feature>
<feature type="binding site" evidence="1">
    <location>
        <begin position="7"/>
        <end position="14"/>
    </location>
    <ligand>
        <name>ATP</name>
        <dbReference type="ChEBI" id="CHEBI:30616"/>
    </ligand>
</feature>
<feature type="binding site" evidence="1">
    <location>
        <position position="91"/>
    </location>
    <ligand>
        <name>substrate</name>
    </ligand>
</feature>
<feature type="binding site" evidence="1">
    <location>
        <begin position="98"/>
        <end position="101"/>
    </location>
    <ligand>
        <name>substrate</name>
    </ligand>
</feature>
<feature type="binding site" evidence="1">
    <location>
        <position position="122"/>
    </location>
    <ligand>
        <name>ATP</name>
        <dbReference type="ChEBI" id="CHEBI:30616"/>
    </ligand>
</feature>
<feature type="binding site" evidence="1">
    <location>
        <position position="172"/>
    </location>
    <ligand>
        <name>substrate</name>
    </ligand>
</feature>
<dbReference type="EC" id="2.7.1.33" evidence="1"/>
<dbReference type="EMBL" id="CP001111">
    <property type="protein sequence ID" value="ACF49939.1"/>
    <property type="molecule type" value="Genomic_DNA"/>
</dbReference>
<dbReference type="RefSeq" id="WP_012509777.1">
    <property type="nucleotide sequence ID" value="NC_011071.1"/>
</dbReference>
<dbReference type="SMR" id="B4ST96"/>
<dbReference type="STRING" id="391008.Smal_0234"/>
<dbReference type="KEGG" id="smt:Smal_0234"/>
<dbReference type="eggNOG" id="COG1521">
    <property type="taxonomic scope" value="Bacteria"/>
</dbReference>
<dbReference type="HOGENOM" id="CLU_066627_0_0_6"/>
<dbReference type="OrthoDB" id="9781305at2"/>
<dbReference type="UniPathway" id="UPA00241">
    <property type="reaction ID" value="UER00352"/>
</dbReference>
<dbReference type="Proteomes" id="UP000001867">
    <property type="component" value="Chromosome"/>
</dbReference>
<dbReference type="GO" id="GO:0005737">
    <property type="term" value="C:cytoplasm"/>
    <property type="evidence" value="ECO:0007669"/>
    <property type="project" value="UniProtKB-SubCell"/>
</dbReference>
<dbReference type="GO" id="GO:0005524">
    <property type="term" value="F:ATP binding"/>
    <property type="evidence" value="ECO:0007669"/>
    <property type="project" value="UniProtKB-UniRule"/>
</dbReference>
<dbReference type="GO" id="GO:0004594">
    <property type="term" value="F:pantothenate kinase activity"/>
    <property type="evidence" value="ECO:0007669"/>
    <property type="project" value="UniProtKB-UniRule"/>
</dbReference>
<dbReference type="GO" id="GO:0015937">
    <property type="term" value="P:coenzyme A biosynthetic process"/>
    <property type="evidence" value="ECO:0007669"/>
    <property type="project" value="UniProtKB-UniRule"/>
</dbReference>
<dbReference type="CDD" id="cd24015">
    <property type="entry name" value="ASKHA_NBD_PanK-III"/>
    <property type="match status" value="1"/>
</dbReference>
<dbReference type="Gene3D" id="3.30.420.40">
    <property type="match status" value="2"/>
</dbReference>
<dbReference type="HAMAP" id="MF_01274">
    <property type="entry name" value="Pantothen_kinase_3"/>
    <property type="match status" value="1"/>
</dbReference>
<dbReference type="InterPro" id="IPR043129">
    <property type="entry name" value="ATPase_NBD"/>
</dbReference>
<dbReference type="InterPro" id="IPR004619">
    <property type="entry name" value="Type_III_PanK"/>
</dbReference>
<dbReference type="NCBIfam" id="TIGR00671">
    <property type="entry name" value="baf"/>
    <property type="match status" value="1"/>
</dbReference>
<dbReference type="NCBIfam" id="NF009864">
    <property type="entry name" value="PRK13327.1"/>
    <property type="match status" value="1"/>
</dbReference>
<dbReference type="PANTHER" id="PTHR34265">
    <property type="entry name" value="TYPE III PANTOTHENATE KINASE"/>
    <property type="match status" value="1"/>
</dbReference>
<dbReference type="PANTHER" id="PTHR34265:SF1">
    <property type="entry name" value="TYPE III PANTOTHENATE KINASE"/>
    <property type="match status" value="1"/>
</dbReference>
<dbReference type="Pfam" id="PF03309">
    <property type="entry name" value="Pan_kinase"/>
    <property type="match status" value="1"/>
</dbReference>
<dbReference type="SUPFAM" id="SSF53067">
    <property type="entry name" value="Actin-like ATPase domain"/>
    <property type="match status" value="2"/>
</dbReference>
<accession>B4ST96</accession>
<protein>
    <recommendedName>
        <fullName evidence="1">Type III pantothenate kinase</fullName>
        <ecNumber evidence="1">2.7.1.33</ecNumber>
    </recommendedName>
    <alternativeName>
        <fullName evidence="1">PanK-III</fullName>
    </alternativeName>
    <alternativeName>
        <fullName evidence="1">Pantothenic acid kinase</fullName>
    </alternativeName>
</protein>
<proteinExistence type="inferred from homology"/>
<name>COAX_STRM5</name>
<keyword id="KW-0067">ATP-binding</keyword>
<keyword id="KW-0173">Coenzyme A biosynthesis</keyword>
<keyword id="KW-0963">Cytoplasm</keyword>
<keyword id="KW-0418">Kinase</keyword>
<keyword id="KW-0547">Nucleotide-binding</keyword>
<keyword id="KW-0630">Potassium</keyword>
<keyword id="KW-0808">Transferase</keyword>
<reference key="1">
    <citation type="submission" date="2008-06" db="EMBL/GenBank/DDBJ databases">
        <title>Complete sequence of Stenotrophomonas maltophilia R551-3.</title>
        <authorList>
            <consortium name="US DOE Joint Genome Institute"/>
            <person name="Lucas S."/>
            <person name="Copeland A."/>
            <person name="Lapidus A."/>
            <person name="Glavina del Rio T."/>
            <person name="Dalin E."/>
            <person name="Tice H."/>
            <person name="Pitluck S."/>
            <person name="Chain P."/>
            <person name="Malfatti S."/>
            <person name="Shin M."/>
            <person name="Vergez L."/>
            <person name="Lang D."/>
            <person name="Schmutz J."/>
            <person name="Larimer F."/>
            <person name="Land M."/>
            <person name="Hauser L."/>
            <person name="Kyrpides N."/>
            <person name="Mikhailova N."/>
            <person name="Taghavi S."/>
            <person name="Monchy S."/>
            <person name="Newman L."/>
            <person name="Vangronsveld J."/>
            <person name="van der Lelie D."/>
            <person name="Richardson P."/>
        </authorList>
    </citation>
    <scope>NUCLEOTIDE SEQUENCE [LARGE SCALE GENOMIC DNA]</scope>
    <source>
        <strain>R551-3</strain>
    </source>
</reference>
<evidence type="ECO:0000255" key="1">
    <source>
        <dbReference type="HAMAP-Rule" id="MF_01274"/>
    </source>
</evidence>
<comment type="function">
    <text evidence="1">Catalyzes the phosphorylation of pantothenate (Pan), the first step in CoA biosynthesis.</text>
</comment>
<comment type="catalytic activity">
    <reaction evidence="1">
        <text>(R)-pantothenate + ATP = (R)-4'-phosphopantothenate + ADP + H(+)</text>
        <dbReference type="Rhea" id="RHEA:16373"/>
        <dbReference type="ChEBI" id="CHEBI:10986"/>
        <dbReference type="ChEBI" id="CHEBI:15378"/>
        <dbReference type="ChEBI" id="CHEBI:29032"/>
        <dbReference type="ChEBI" id="CHEBI:30616"/>
        <dbReference type="ChEBI" id="CHEBI:456216"/>
        <dbReference type="EC" id="2.7.1.33"/>
    </reaction>
</comment>
<comment type="cofactor">
    <cofactor evidence="1">
        <name>NH4(+)</name>
        <dbReference type="ChEBI" id="CHEBI:28938"/>
    </cofactor>
    <cofactor evidence="1">
        <name>K(+)</name>
        <dbReference type="ChEBI" id="CHEBI:29103"/>
    </cofactor>
    <text evidence="1">A monovalent cation. Ammonium or potassium.</text>
</comment>
<comment type="pathway">
    <text evidence="1">Cofactor biosynthesis; coenzyme A biosynthesis; CoA from (R)-pantothenate: step 1/5.</text>
</comment>
<comment type="subunit">
    <text evidence="1">Homodimer.</text>
</comment>
<comment type="subcellular location">
    <subcellularLocation>
        <location evidence="1">Cytoplasm</location>
    </subcellularLocation>
</comment>
<comment type="similarity">
    <text evidence="1">Belongs to the type III pantothenate kinase family.</text>
</comment>
<sequence>MSDWLFDLGNSRFKFAPLQGDRAGDVQAWAHGAEGMAGQPPHSLPSGTTAFVASVAAPSLTSAMLDQLQRRFEHVHVVRTSAECAGVRIAYAKPEKFGVDRFLALLAAAKAQRPVLVVGVGTALTIDLLDANGQHHGGRISASPTTMREALHARAVQLPATGGDYSEFANDTADALASGCDGAAVALIERSAQQAHALLGVAPSLLVHGGGAPALMPLLPGADYHPSLVLDGLARWAVHQPAG</sequence>